<protein>
    <recommendedName>
        <fullName evidence="1">Dihydroorotase</fullName>
        <shortName evidence="1">DHOase</shortName>
        <ecNumber evidence="1">3.5.2.3</ecNumber>
    </recommendedName>
</protein>
<proteinExistence type="inferred from homology"/>
<gene>
    <name evidence="1" type="primary">pyrC</name>
    <name type="ordered locus">CKO_02001</name>
</gene>
<comment type="function">
    <text evidence="1">Catalyzes the reversible cyclization of carbamoyl aspartate to dihydroorotate.</text>
</comment>
<comment type="catalytic activity">
    <reaction evidence="1">
        <text>(S)-dihydroorotate + H2O = N-carbamoyl-L-aspartate + H(+)</text>
        <dbReference type="Rhea" id="RHEA:24296"/>
        <dbReference type="ChEBI" id="CHEBI:15377"/>
        <dbReference type="ChEBI" id="CHEBI:15378"/>
        <dbReference type="ChEBI" id="CHEBI:30864"/>
        <dbReference type="ChEBI" id="CHEBI:32814"/>
        <dbReference type="EC" id="3.5.2.3"/>
    </reaction>
</comment>
<comment type="cofactor">
    <cofactor evidence="1">
        <name>Zn(2+)</name>
        <dbReference type="ChEBI" id="CHEBI:29105"/>
    </cofactor>
    <text evidence="1">Binds 2 Zn(2+) ions per subunit.</text>
</comment>
<comment type="pathway">
    <text evidence="1">Pyrimidine metabolism; UMP biosynthesis via de novo pathway; (S)-dihydroorotate from bicarbonate: step 3/3.</text>
</comment>
<comment type="subunit">
    <text evidence="1">Homodimer.</text>
</comment>
<comment type="similarity">
    <text evidence="1">Belongs to the metallo-dependent hydrolases superfamily. DHOase family. Class II DHOase subfamily.</text>
</comment>
<feature type="chain" id="PRO_1000024008" description="Dihydroorotase">
    <location>
        <begin position="1"/>
        <end position="347"/>
    </location>
</feature>
<feature type="active site" evidence="1">
    <location>
        <position position="251"/>
    </location>
</feature>
<feature type="binding site" evidence="1">
    <location>
        <position position="17"/>
    </location>
    <ligand>
        <name>Zn(2+)</name>
        <dbReference type="ChEBI" id="CHEBI:29105"/>
        <label>1</label>
    </ligand>
</feature>
<feature type="binding site" evidence="1">
    <location>
        <begin position="19"/>
        <end position="21"/>
    </location>
    <ligand>
        <name>substrate</name>
    </ligand>
</feature>
<feature type="binding site" evidence="1">
    <location>
        <position position="19"/>
    </location>
    <ligand>
        <name>Zn(2+)</name>
        <dbReference type="ChEBI" id="CHEBI:29105"/>
        <label>1</label>
    </ligand>
</feature>
<feature type="binding site" evidence="1">
    <location>
        <position position="45"/>
    </location>
    <ligand>
        <name>substrate</name>
    </ligand>
</feature>
<feature type="binding site" description="via carbamate group" evidence="1">
    <location>
        <position position="103"/>
    </location>
    <ligand>
        <name>Zn(2+)</name>
        <dbReference type="ChEBI" id="CHEBI:29105"/>
        <label>1</label>
    </ligand>
</feature>
<feature type="binding site" description="via carbamate group" evidence="1">
    <location>
        <position position="103"/>
    </location>
    <ligand>
        <name>Zn(2+)</name>
        <dbReference type="ChEBI" id="CHEBI:29105"/>
        <label>2</label>
    </ligand>
</feature>
<feature type="binding site" evidence="1">
    <location>
        <position position="140"/>
    </location>
    <ligand>
        <name>substrate</name>
    </ligand>
</feature>
<feature type="binding site" evidence="1">
    <location>
        <position position="140"/>
    </location>
    <ligand>
        <name>Zn(2+)</name>
        <dbReference type="ChEBI" id="CHEBI:29105"/>
        <label>2</label>
    </ligand>
</feature>
<feature type="binding site" evidence="1">
    <location>
        <position position="178"/>
    </location>
    <ligand>
        <name>Zn(2+)</name>
        <dbReference type="ChEBI" id="CHEBI:29105"/>
        <label>2</label>
    </ligand>
</feature>
<feature type="binding site" evidence="1">
    <location>
        <position position="223"/>
    </location>
    <ligand>
        <name>substrate</name>
    </ligand>
</feature>
<feature type="binding site" evidence="1">
    <location>
        <position position="251"/>
    </location>
    <ligand>
        <name>Zn(2+)</name>
        <dbReference type="ChEBI" id="CHEBI:29105"/>
        <label>1</label>
    </ligand>
</feature>
<feature type="binding site" evidence="1">
    <location>
        <position position="255"/>
    </location>
    <ligand>
        <name>substrate</name>
    </ligand>
</feature>
<feature type="binding site" evidence="1">
    <location>
        <position position="267"/>
    </location>
    <ligand>
        <name>substrate</name>
    </ligand>
</feature>
<feature type="modified residue" description="N6-carboxylysine" evidence="1">
    <location>
        <position position="103"/>
    </location>
</feature>
<sequence>MTAPSQVLKIRRPDDWHVHLRDGDMLKTVVPYTSEIYGRAIVMPNLAPPVTTVDAAIAYRQRILDAVPAGHDFTPLMTCYLTDTLDPDELERGFREGVFTAAKLYPANATTNSSHGVTSVDTIMPVLERMEKLGMPLLVHGEVTHADIDIFDREARFIETVMEPLRQRLTALKVVFEHITTKDAAEYVRDGNELLAATITPQHLMFNRNHMLVGGIRPHLYCLPILKRNVHQQALRELVASGFSRAFLGTDSAPHARHRKETSCGCAGCFNAPTALGSYATVFEEMNALAHFEAFCSLNGPRFYGLSVNETYVELVREEQLVPESITLADDSLVPFLGGERVRWSVK</sequence>
<organism>
    <name type="scientific">Citrobacter koseri (strain ATCC BAA-895 / CDC 4225-83 / SGSC4696)</name>
    <dbReference type="NCBI Taxonomy" id="290338"/>
    <lineage>
        <taxon>Bacteria</taxon>
        <taxon>Pseudomonadati</taxon>
        <taxon>Pseudomonadota</taxon>
        <taxon>Gammaproteobacteria</taxon>
        <taxon>Enterobacterales</taxon>
        <taxon>Enterobacteriaceae</taxon>
        <taxon>Citrobacter</taxon>
    </lineage>
</organism>
<name>PYRC_CITK8</name>
<dbReference type="EC" id="3.5.2.3" evidence="1"/>
<dbReference type="EMBL" id="CP000822">
    <property type="protein sequence ID" value="ABV13127.1"/>
    <property type="molecule type" value="Genomic_DNA"/>
</dbReference>
<dbReference type="RefSeq" id="WP_012132863.1">
    <property type="nucleotide sequence ID" value="NC_009792.1"/>
</dbReference>
<dbReference type="SMR" id="A8AI14"/>
<dbReference type="STRING" id="290338.CKO_02001"/>
<dbReference type="MEROPS" id="M38.A02"/>
<dbReference type="GeneID" id="45135970"/>
<dbReference type="KEGG" id="cko:CKO_02001"/>
<dbReference type="HOGENOM" id="CLU_041558_1_0_6"/>
<dbReference type="OrthoDB" id="9808095at2"/>
<dbReference type="UniPathway" id="UPA00070">
    <property type="reaction ID" value="UER00117"/>
</dbReference>
<dbReference type="Proteomes" id="UP000008148">
    <property type="component" value="Chromosome"/>
</dbReference>
<dbReference type="GO" id="GO:0005829">
    <property type="term" value="C:cytosol"/>
    <property type="evidence" value="ECO:0007669"/>
    <property type="project" value="TreeGrafter"/>
</dbReference>
<dbReference type="GO" id="GO:0004151">
    <property type="term" value="F:dihydroorotase activity"/>
    <property type="evidence" value="ECO:0007669"/>
    <property type="project" value="UniProtKB-UniRule"/>
</dbReference>
<dbReference type="GO" id="GO:0008270">
    <property type="term" value="F:zinc ion binding"/>
    <property type="evidence" value="ECO:0007669"/>
    <property type="project" value="UniProtKB-UniRule"/>
</dbReference>
<dbReference type="GO" id="GO:0006207">
    <property type="term" value="P:'de novo' pyrimidine nucleobase biosynthetic process"/>
    <property type="evidence" value="ECO:0007669"/>
    <property type="project" value="TreeGrafter"/>
</dbReference>
<dbReference type="GO" id="GO:0044205">
    <property type="term" value="P:'de novo' UMP biosynthetic process"/>
    <property type="evidence" value="ECO:0007669"/>
    <property type="project" value="UniProtKB-UniRule"/>
</dbReference>
<dbReference type="CDD" id="cd01294">
    <property type="entry name" value="DHOase"/>
    <property type="match status" value="1"/>
</dbReference>
<dbReference type="FunFam" id="3.20.20.140:FF:000006">
    <property type="entry name" value="Dihydroorotase"/>
    <property type="match status" value="1"/>
</dbReference>
<dbReference type="Gene3D" id="3.20.20.140">
    <property type="entry name" value="Metal-dependent hydrolases"/>
    <property type="match status" value="1"/>
</dbReference>
<dbReference type="HAMAP" id="MF_00219">
    <property type="entry name" value="PyrC_classII"/>
    <property type="match status" value="1"/>
</dbReference>
<dbReference type="InterPro" id="IPR006680">
    <property type="entry name" value="Amidohydro-rel"/>
</dbReference>
<dbReference type="InterPro" id="IPR004721">
    <property type="entry name" value="DHOdimr"/>
</dbReference>
<dbReference type="InterPro" id="IPR002195">
    <property type="entry name" value="Dihydroorotase_CS"/>
</dbReference>
<dbReference type="InterPro" id="IPR032466">
    <property type="entry name" value="Metal_Hydrolase"/>
</dbReference>
<dbReference type="NCBIfam" id="TIGR00856">
    <property type="entry name" value="pyrC_dimer"/>
    <property type="match status" value="1"/>
</dbReference>
<dbReference type="PANTHER" id="PTHR43137">
    <property type="entry name" value="DIHYDROOROTASE"/>
    <property type="match status" value="1"/>
</dbReference>
<dbReference type="PANTHER" id="PTHR43137:SF1">
    <property type="entry name" value="DIHYDROOROTASE"/>
    <property type="match status" value="1"/>
</dbReference>
<dbReference type="Pfam" id="PF01979">
    <property type="entry name" value="Amidohydro_1"/>
    <property type="match status" value="1"/>
</dbReference>
<dbReference type="PIRSF" id="PIRSF001237">
    <property type="entry name" value="DHOdimr"/>
    <property type="match status" value="1"/>
</dbReference>
<dbReference type="SUPFAM" id="SSF51556">
    <property type="entry name" value="Metallo-dependent hydrolases"/>
    <property type="match status" value="1"/>
</dbReference>
<dbReference type="PROSITE" id="PS00482">
    <property type="entry name" value="DIHYDROOROTASE_1"/>
    <property type="match status" value="1"/>
</dbReference>
<dbReference type="PROSITE" id="PS00483">
    <property type="entry name" value="DIHYDROOROTASE_2"/>
    <property type="match status" value="1"/>
</dbReference>
<reference key="1">
    <citation type="submission" date="2007-08" db="EMBL/GenBank/DDBJ databases">
        <authorList>
            <consortium name="The Citrobacter koseri Genome Sequencing Project"/>
            <person name="McClelland M."/>
            <person name="Sanderson E.K."/>
            <person name="Porwollik S."/>
            <person name="Spieth J."/>
            <person name="Clifton W.S."/>
            <person name="Latreille P."/>
            <person name="Courtney L."/>
            <person name="Wang C."/>
            <person name="Pepin K."/>
            <person name="Bhonagiri V."/>
            <person name="Nash W."/>
            <person name="Johnson M."/>
            <person name="Thiruvilangam P."/>
            <person name="Wilson R."/>
        </authorList>
    </citation>
    <scope>NUCLEOTIDE SEQUENCE [LARGE SCALE GENOMIC DNA]</scope>
    <source>
        <strain>ATCC BAA-895 / CDC 4225-83 / SGSC4696</strain>
    </source>
</reference>
<keyword id="KW-0378">Hydrolase</keyword>
<keyword id="KW-0479">Metal-binding</keyword>
<keyword id="KW-0665">Pyrimidine biosynthesis</keyword>
<keyword id="KW-1185">Reference proteome</keyword>
<keyword id="KW-0862">Zinc</keyword>
<accession>A8AI14</accession>
<evidence type="ECO:0000255" key="1">
    <source>
        <dbReference type="HAMAP-Rule" id="MF_00219"/>
    </source>
</evidence>